<sequence length="478" mass="49939">MASTAATAALSIIKSTGGAAVTRSSRASFGHIPSTSVSARRLGFSAVVDSRFSVHVASKVHSVRGKGARGVITMAKKSVGDLNSVDLKGKKVFVRADLNVPLDDNQNITDDTRIRAAIPTIKFLIENGAKVILSTHLGRPKGVTPKFSLAPLVPRLSELLGIEVVKADDCIGPEVETLVASLPEGGVLLLENVRFYKEEEKNEPDFAKKLASLADLYVNDAFGTAHRAHASTEGVTKFLKPSVAGFLLQKELDYLVGAVSNPKRPFAAIVGGSKVSSKIGVIESLLEKCDILLLGGGMIFTFYKAQGLSVGSSLVEEDKLELATTLLAKAKARGVSLLLPTDVVIADKFAPDANSKIVPASAIPDGWMGLDIGPDSVKTFNEALDTTQTVIWNGPMGVFEFEKFAKGTEAVANKLAELSKKGVTTIIGGGDSVAAVEKVGVAGVMSHISTGGGASLELLEGKVLPGVVALDEATPVTV</sequence>
<comment type="catalytic activity">
    <reaction evidence="2">
        <text>(2R)-3-phosphoglycerate + ATP = (2R)-3-phospho-glyceroyl phosphate + ADP</text>
        <dbReference type="Rhea" id="RHEA:14801"/>
        <dbReference type="ChEBI" id="CHEBI:30616"/>
        <dbReference type="ChEBI" id="CHEBI:57604"/>
        <dbReference type="ChEBI" id="CHEBI:58272"/>
        <dbReference type="ChEBI" id="CHEBI:456216"/>
        <dbReference type="EC" id="2.7.2.3"/>
    </reaction>
</comment>
<comment type="cofactor">
    <cofactor evidence="2">
        <name>Mg(2+)</name>
        <dbReference type="ChEBI" id="CHEBI:18420"/>
    </cofactor>
</comment>
<comment type="pathway">
    <text>Carbohydrate biosynthesis; Calvin cycle.</text>
</comment>
<comment type="subunit">
    <text evidence="1">Monomer.</text>
</comment>
<comment type="subcellular location">
    <subcellularLocation>
        <location>Plastid</location>
        <location>Chloroplast</location>
    </subcellularLocation>
</comment>
<comment type="alternative products">
    <event type="alternative splicing"/>
    <isoform>
        <id>P50318-1</id>
        <name>1</name>
        <sequence type="displayed"/>
    </isoform>
    <text>A number of isoforms are produced. According to EST sequences.</text>
</comment>
<comment type="similarity">
    <text evidence="5">Belongs to the phosphoglycerate kinase family.</text>
</comment>
<protein>
    <recommendedName>
        <fullName>Phosphoglycerate kinase 2, chloroplastic</fullName>
        <ecNumber evidence="2">2.7.2.3</ecNumber>
    </recommendedName>
</protein>
<feature type="transit peptide" description="Chloroplast" evidence="5">
    <location>
        <begin position="1"/>
        <end position="74"/>
    </location>
</feature>
<feature type="chain" id="PRO_0000023889" description="Phosphoglycerate kinase 2, chloroplastic">
    <location>
        <begin position="75"/>
        <end position="478"/>
    </location>
</feature>
<feature type="binding site" evidence="2">
    <location>
        <position position="96"/>
    </location>
    <ligand>
        <name>(2R)-3-phosphoglycerate</name>
        <dbReference type="ChEBI" id="CHEBI:58272"/>
    </ligand>
</feature>
<feature type="binding site" evidence="3">
    <location>
        <position position="97"/>
    </location>
    <ligand>
        <name>(2R)-3-phosphoglycerate</name>
        <dbReference type="ChEBI" id="CHEBI:58272"/>
    </ligand>
</feature>
<feature type="binding site" evidence="3">
    <location>
        <position position="99"/>
    </location>
    <ligand>
        <name>(2R)-3-phosphoglycerate</name>
        <dbReference type="ChEBI" id="CHEBI:58272"/>
    </ligand>
</feature>
<feature type="binding site" evidence="3">
    <location>
        <position position="113"/>
    </location>
    <ligand>
        <name>(2R)-3-phosphoglycerate</name>
        <dbReference type="ChEBI" id="CHEBI:58272"/>
    </ligand>
</feature>
<feature type="binding site" evidence="2">
    <location>
        <position position="135"/>
    </location>
    <ligand>
        <name>(2R)-3-phosphoglycerate</name>
        <dbReference type="ChEBI" id="CHEBI:58272"/>
    </ligand>
</feature>
<feature type="binding site" evidence="3">
    <location>
        <position position="136"/>
    </location>
    <ligand>
        <name>(2R)-3-phosphoglycerate</name>
        <dbReference type="ChEBI" id="CHEBI:58272"/>
    </ligand>
</feature>
<feature type="binding site" evidence="2">
    <location>
        <position position="138"/>
    </location>
    <ligand>
        <name>(2R)-3-phosphoglycerate</name>
        <dbReference type="ChEBI" id="CHEBI:58272"/>
    </ligand>
</feature>
<feature type="binding site" evidence="3">
    <location>
        <position position="139"/>
    </location>
    <ligand>
        <name>(2R)-3-phosphoglycerate</name>
        <dbReference type="ChEBI" id="CHEBI:58272"/>
    </ligand>
</feature>
<feature type="binding site" evidence="3">
    <location>
        <position position="194"/>
    </location>
    <ligand>
        <name>(2R)-3-phosphoglycerate</name>
        <dbReference type="ChEBI" id="CHEBI:58272"/>
    </ligand>
</feature>
<feature type="binding site" evidence="2">
    <location>
        <position position="226"/>
    </location>
    <ligand>
        <name>(2R)-3-phosphoglycerate</name>
        <dbReference type="ChEBI" id="CHEBI:58272"/>
    </ligand>
</feature>
<feature type="binding site" evidence="3">
    <location>
        <position position="227"/>
    </location>
    <ligand>
        <name>(2R)-3-phosphoglycerate</name>
        <dbReference type="ChEBI" id="CHEBI:58272"/>
    </ligand>
</feature>
<feature type="binding site" evidence="2">
    <location>
        <position position="272"/>
    </location>
    <ligand>
        <name>ADP</name>
        <dbReference type="ChEBI" id="CHEBI:456216"/>
    </ligand>
</feature>
<feature type="binding site" evidence="2">
    <location>
        <position position="272"/>
    </location>
    <ligand>
        <name>CDP</name>
        <dbReference type="ChEBI" id="CHEBI:58069"/>
    </ligand>
</feature>
<feature type="binding site" evidence="3">
    <location>
        <position position="274"/>
    </location>
    <ligand>
        <name>AMP</name>
        <dbReference type="ChEBI" id="CHEBI:456215"/>
    </ligand>
</feature>
<feature type="binding site" evidence="3">
    <location>
        <position position="278"/>
    </location>
    <ligand>
        <name>AMP</name>
        <dbReference type="ChEBI" id="CHEBI:456215"/>
    </ligand>
</feature>
<feature type="binding site" evidence="3">
    <location>
        <position position="278"/>
    </location>
    <ligand>
        <name>ATP</name>
        <dbReference type="ChEBI" id="CHEBI:30616"/>
    </ligand>
</feature>
<feature type="binding site" evidence="2">
    <location>
        <position position="296"/>
    </location>
    <ligand>
        <name>ADP</name>
        <dbReference type="ChEBI" id="CHEBI:456216"/>
    </ligand>
</feature>
<feature type="binding site" evidence="2">
    <location>
        <position position="296"/>
    </location>
    <ligand>
        <name>CDP</name>
        <dbReference type="ChEBI" id="CHEBI:58069"/>
    </ligand>
</feature>
<feature type="binding site" evidence="3">
    <location>
        <position position="297"/>
    </location>
    <ligand>
        <name>AMP</name>
        <dbReference type="ChEBI" id="CHEBI:456215"/>
    </ligand>
</feature>
<feature type="binding site" evidence="3">
    <location>
        <position position="297"/>
    </location>
    <ligand>
        <name>ATP</name>
        <dbReference type="ChEBI" id="CHEBI:30616"/>
    </ligand>
</feature>
<feature type="binding site" evidence="3">
    <location>
        <position position="369"/>
    </location>
    <ligand>
        <name>AMP</name>
        <dbReference type="ChEBI" id="CHEBI:456215"/>
    </ligand>
</feature>
<feature type="binding site" evidence="3">
    <location>
        <position position="369"/>
    </location>
    <ligand>
        <name>ATP</name>
        <dbReference type="ChEBI" id="CHEBI:30616"/>
    </ligand>
</feature>
<feature type="binding site" evidence="2">
    <location>
        <position position="394"/>
    </location>
    <ligand>
        <name>CDP</name>
        <dbReference type="ChEBI" id="CHEBI:58069"/>
    </ligand>
</feature>
<feature type="binding site" evidence="2">
    <location>
        <position position="399"/>
    </location>
    <ligand>
        <name>ADP</name>
        <dbReference type="ChEBI" id="CHEBI:456216"/>
    </ligand>
</feature>
<feature type="binding site" evidence="2">
    <location>
        <position position="399"/>
    </location>
    <ligand>
        <name>CDP</name>
        <dbReference type="ChEBI" id="CHEBI:58069"/>
    </ligand>
</feature>
<feature type="binding site" evidence="3">
    <location>
        <position position="400"/>
    </location>
    <ligand>
        <name>AMP</name>
        <dbReference type="ChEBI" id="CHEBI:456215"/>
    </ligand>
</feature>
<feature type="binding site" evidence="3">
    <location>
        <position position="400"/>
    </location>
    <ligand>
        <name>ATP</name>
        <dbReference type="ChEBI" id="CHEBI:30616"/>
    </ligand>
</feature>
<feature type="binding site" evidence="3">
    <location>
        <position position="431"/>
    </location>
    <ligand>
        <name>ATP</name>
        <dbReference type="ChEBI" id="CHEBI:30616"/>
    </ligand>
</feature>
<feature type="binding site" evidence="3">
    <location>
        <position position="431"/>
    </location>
    <ligand>
        <name>Mg(2+)</name>
        <dbReference type="ChEBI" id="CHEBI:18420"/>
    </ligand>
</feature>
<feature type="binding site" evidence="3">
    <location>
        <position position="432"/>
    </location>
    <ligand>
        <name>ATP</name>
        <dbReference type="ChEBI" id="CHEBI:30616"/>
    </ligand>
</feature>
<feature type="modified residue" description="Phosphoserine" evidence="4">
    <location>
        <position position="78"/>
    </location>
</feature>
<feature type="sequence conflict" description="In Ref. 4; AAA79705." evidence="5" ref="4">
    <original>A</original>
    <variation>R</variation>
    <location>
        <position position="412"/>
    </location>
</feature>
<proteinExistence type="evidence at protein level"/>
<dbReference type="EC" id="2.7.2.3" evidence="2"/>
<dbReference type="EMBL" id="AC009894">
    <property type="protein sequence ID" value="AAF02830.1"/>
    <property type="molecule type" value="Genomic_DNA"/>
</dbReference>
<dbReference type="EMBL" id="AC069159">
    <property type="protein sequence ID" value="AAG50920.1"/>
    <property type="molecule type" value="Genomic_DNA"/>
</dbReference>
<dbReference type="EMBL" id="CP002684">
    <property type="protein sequence ID" value="AEE33356.1"/>
    <property type="molecule type" value="Genomic_DNA"/>
</dbReference>
<dbReference type="EMBL" id="AY056291">
    <property type="protein sequence ID" value="AAL07140.1"/>
    <property type="molecule type" value="mRNA"/>
</dbReference>
<dbReference type="EMBL" id="AY099598">
    <property type="protein sequence ID" value="AAM20449.1"/>
    <property type="molecule type" value="mRNA"/>
</dbReference>
<dbReference type="EMBL" id="BT000250">
    <property type="protein sequence ID" value="AAN15569.1"/>
    <property type="molecule type" value="mRNA"/>
</dbReference>
<dbReference type="EMBL" id="U37700">
    <property type="protein sequence ID" value="AAA79705.1"/>
    <property type="molecule type" value="mRNA"/>
</dbReference>
<dbReference type="PIR" id="D96603">
    <property type="entry name" value="D96603"/>
</dbReference>
<dbReference type="PIR" id="S71214">
    <property type="entry name" value="S71214"/>
</dbReference>
<dbReference type="RefSeq" id="NP_176015.1">
    <molecule id="P50318-1"/>
    <property type="nucleotide sequence ID" value="NM_104498.4"/>
</dbReference>
<dbReference type="SMR" id="P50318"/>
<dbReference type="BioGRID" id="27297">
    <property type="interactions" value="7"/>
</dbReference>
<dbReference type="FunCoup" id="P50318">
    <property type="interactions" value="2379"/>
</dbReference>
<dbReference type="STRING" id="3702.P50318"/>
<dbReference type="GlyGen" id="P50318">
    <property type="glycosylation" value="1 site"/>
</dbReference>
<dbReference type="iPTMnet" id="P50318"/>
<dbReference type="PaxDb" id="3702-AT1G56190.1"/>
<dbReference type="ProteomicsDB" id="234996">
    <molecule id="P50318-1"/>
</dbReference>
<dbReference type="EnsemblPlants" id="AT1G56190.1">
    <molecule id="P50318-1"/>
    <property type="protein sequence ID" value="AT1G56190.1"/>
    <property type="gene ID" value="AT1G56190"/>
</dbReference>
<dbReference type="GeneID" id="842072"/>
<dbReference type="Gramene" id="AT1G56190.1">
    <molecule id="P50318-1"/>
    <property type="protein sequence ID" value="AT1G56190.1"/>
    <property type="gene ID" value="AT1G56190"/>
</dbReference>
<dbReference type="KEGG" id="ath:AT1G56190"/>
<dbReference type="Araport" id="AT1G56190"/>
<dbReference type="TAIR" id="AT1G56190">
    <property type="gene designation" value="CPGK2"/>
</dbReference>
<dbReference type="eggNOG" id="KOG1367">
    <property type="taxonomic scope" value="Eukaryota"/>
</dbReference>
<dbReference type="InParanoid" id="P50318"/>
<dbReference type="OrthoDB" id="275353at2759"/>
<dbReference type="BioCyc" id="ARA:AT1G56190-MONOMER"/>
<dbReference type="BRENDA" id="2.7.2.3">
    <property type="organism ID" value="399"/>
</dbReference>
<dbReference type="UniPathway" id="UPA00116"/>
<dbReference type="CD-CODE" id="4299E36E">
    <property type="entry name" value="Nucleolus"/>
</dbReference>
<dbReference type="PRO" id="PR:P50318"/>
<dbReference type="Proteomes" id="UP000006548">
    <property type="component" value="Chromosome 1"/>
</dbReference>
<dbReference type="ExpressionAtlas" id="P50318">
    <property type="expression patterns" value="baseline and differential"/>
</dbReference>
<dbReference type="GO" id="GO:0009507">
    <property type="term" value="C:chloroplast"/>
    <property type="evidence" value="ECO:0007005"/>
    <property type="project" value="TAIR"/>
</dbReference>
<dbReference type="GO" id="GO:0009570">
    <property type="term" value="C:chloroplast stroma"/>
    <property type="evidence" value="ECO:0007005"/>
    <property type="project" value="TAIR"/>
</dbReference>
<dbReference type="GO" id="GO:0016020">
    <property type="term" value="C:membrane"/>
    <property type="evidence" value="ECO:0007669"/>
    <property type="project" value="GOC"/>
</dbReference>
<dbReference type="GO" id="GO:0005739">
    <property type="term" value="C:mitochondrion"/>
    <property type="evidence" value="ECO:0007005"/>
    <property type="project" value="TAIR"/>
</dbReference>
<dbReference type="GO" id="GO:0005634">
    <property type="term" value="C:nucleus"/>
    <property type="evidence" value="ECO:0007005"/>
    <property type="project" value="TAIR"/>
</dbReference>
<dbReference type="GO" id="GO:0009536">
    <property type="term" value="C:plastid"/>
    <property type="evidence" value="ECO:0000314"/>
    <property type="project" value="TAIR"/>
</dbReference>
<dbReference type="GO" id="GO:0009579">
    <property type="term" value="C:thylakoid"/>
    <property type="evidence" value="ECO:0007005"/>
    <property type="project" value="TAIR"/>
</dbReference>
<dbReference type="GO" id="GO:0005524">
    <property type="term" value="F:ATP binding"/>
    <property type="evidence" value="ECO:0007669"/>
    <property type="project" value="UniProtKB-KW"/>
</dbReference>
<dbReference type="GO" id="GO:0046872">
    <property type="term" value="F:metal ion binding"/>
    <property type="evidence" value="ECO:0007669"/>
    <property type="project" value="UniProtKB-KW"/>
</dbReference>
<dbReference type="GO" id="GO:0004618">
    <property type="term" value="F:phosphoglycerate kinase activity"/>
    <property type="evidence" value="ECO:0007669"/>
    <property type="project" value="UniProtKB-EC"/>
</dbReference>
<dbReference type="GO" id="GO:0004672">
    <property type="term" value="F:protein kinase activity"/>
    <property type="evidence" value="ECO:0000314"/>
    <property type="project" value="TAIR"/>
</dbReference>
<dbReference type="GO" id="GO:0019375">
    <property type="term" value="P:galactolipid biosynthetic process"/>
    <property type="evidence" value="ECO:0000316"/>
    <property type="project" value="TAIR"/>
</dbReference>
<dbReference type="GO" id="GO:0006096">
    <property type="term" value="P:glycolytic process"/>
    <property type="evidence" value="ECO:0000315"/>
    <property type="project" value="TAIR"/>
</dbReference>
<dbReference type="GO" id="GO:0019253">
    <property type="term" value="P:reductive pentose-phosphate cycle"/>
    <property type="evidence" value="ECO:0007669"/>
    <property type="project" value="UniProtKB-UniPathway"/>
</dbReference>
<dbReference type="GO" id="GO:0050691">
    <property type="term" value="P:regulation of defense response to virus by host"/>
    <property type="evidence" value="ECO:0000315"/>
    <property type="project" value="TAIR"/>
</dbReference>
<dbReference type="GO" id="GO:0010027">
    <property type="term" value="P:thylakoid membrane organization"/>
    <property type="evidence" value="ECO:0000316"/>
    <property type="project" value="TAIR"/>
</dbReference>
<dbReference type="CDD" id="cd00318">
    <property type="entry name" value="Phosphoglycerate_kinase"/>
    <property type="match status" value="1"/>
</dbReference>
<dbReference type="FunFam" id="3.40.50.1260:FF:000007">
    <property type="entry name" value="Phosphoglycerate kinase"/>
    <property type="match status" value="1"/>
</dbReference>
<dbReference type="FunFam" id="3.40.50.1260:FF:000014">
    <property type="entry name" value="Phosphoglycerate kinase"/>
    <property type="match status" value="1"/>
</dbReference>
<dbReference type="Gene3D" id="3.40.50.1260">
    <property type="entry name" value="Phosphoglycerate kinase, N-terminal domain"/>
    <property type="match status" value="3"/>
</dbReference>
<dbReference type="HAMAP" id="MF_00145">
    <property type="entry name" value="Phosphoglyc_kinase"/>
    <property type="match status" value="1"/>
</dbReference>
<dbReference type="InterPro" id="IPR001576">
    <property type="entry name" value="Phosphoglycerate_kinase"/>
</dbReference>
<dbReference type="InterPro" id="IPR015911">
    <property type="entry name" value="Phosphoglycerate_kinase_CS"/>
</dbReference>
<dbReference type="InterPro" id="IPR015824">
    <property type="entry name" value="Phosphoglycerate_kinase_N"/>
</dbReference>
<dbReference type="InterPro" id="IPR036043">
    <property type="entry name" value="Phosphoglycerate_kinase_sf"/>
</dbReference>
<dbReference type="PANTHER" id="PTHR11406">
    <property type="entry name" value="PHOSPHOGLYCERATE KINASE"/>
    <property type="match status" value="1"/>
</dbReference>
<dbReference type="PANTHER" id="PTHR11406:SF23">
    <property type="entry name" value="PHOSPHOGLYCERATE KINASE 1, CHLOROPLASTIC-RELATED"/>
    <property type="match status" value="1"/>
</dbReference>
<dbReference type="Pfam" id="PF00162">
    <property type="entry name" value="PGK"/>
    <property type="match status" value="1"/>
</dbReference>
<dbReference type="PIRSF" id="PIRSF000724">
    <property type="entry name" value="Pgk"/>
    <property type="match status" value="1"/>
</dbReference>
<dbReference type="PRINTS" id="PR00477">
    <property type="entry name" value="PHGLYCKINASE"/>
</dbReference>
<dbReference type="SUPFAM" id="SSF53748">
    <property type="entry name" value="Phosphoglycerate kinase"/>
    <property type="match status" value="1"/>
</dbReference>
<dbReference type="PROSITE" id="PS00111">
    <property type="entry name" value="PGLYCERATE_KINASE"/>
    <property type="match status" value="1"/>
</dbReference>
<evidence type="ECO:0000250" key="1"/>
<evidence type="ECO:0000250" key="2">
    <source>
        <dbReference type="UniProtKB" id="P00558"/>
    </source>
</evidence>
<evidence type="ECO:0000250" key="3">
    <source>
        <dbReference type="UniProtKB" id="Q7SIB7"/>
    </source>
</evidence>
<evidence type="ECO:0000250" key="4">
    <source>
        <dbReference type="UniProtKB" id="Q9LD57"/>
    </source>
</evidence>
<evidence type="ECO:0000305" key="5"/>
<reference key="1">
    <citation type="journal article" date="2000" name="Nature">
        <title>Sequence and analysis of chromosome 1 of the plant Arabidopsis thaliana.</title>
        <authorList>
            <person name="Theologis A."/>
            <person name="Ecker J.R."/>
            <person name="Palm C.J."/>
            <person name="Federspiel N.A."/>
            <person name="Kaul S."/>
            <person name="White O."/>
            <person name="Alonso J."/>
            <person name="Altafi H."/>
            <person name="Araujo R."/>
            <person name="Bowman C.L."/>
            <person name="Brooks S.Y."/>
            <person name="Buehler E."/>
            <person name="Chan A."/>
            <person name="Chao Q."/>
            <person name="Chen H."/>
            <person name="Cheuk R.F."/>
            <person name="Chin C.W."/>
            <person name="Chung M.K."/>
            <person name="Conn L."/>
            <person name="Conway A.B."/>
            <person name="Conway A.R."/>
            <person name="Creasy T.H."/>
            <person name="Dewar K."/>
            <person name="Dunn P."/>
            <person name="Etgu P."/>
            <person name="Feldblyum T.V."/>
            <person name="Feng J.-D."/>
            <person name="Fong B."/>
            <person name="Fujii C.Y."/>
            <person name="Gill J.E."/>
            <person name="Goldsmith A.D."/>
            <person name="Haas B."/>
            <person name="Hansen N.F."/>
            <person name="Hughes B."/>
            <person name="Huizar L."/>
            <person name="Hunter J.L."/>
            <person name="Jenkins J."/>
            <person name="Johnson-Hopson C."/>
            <person name="Khan S."/>
            <person name="Khaykin E."/>
            <person name="Kim C.J."/>
            <person name="Koo H.L."/>
            <person name="Kremenetskaia I."/>
            <person name="Kurtz D.B."/>
            <person name="Kwan A."/>
            <person name="Lam B."/>
            <person name="Langin-Hooper S."/>
            <person name="Lee A."/>
            <person name="Lee J.M."/>
            <person name="Lenz C.A."/>
            <person name="Li J.H."/>
            <person name="Li Y.-P."/>
            <person name="Lin X."/>
            <person name="Liu S.X."/>
            <person name="Liu Z.A."/>
            <person name="Luros J.S."/>
            <person name="Maiti R."/>
            <person name="Marziali A."/>
            <person name="Militscher J."/>
            <person name="Miranda M."/>
            <person name="Nguyen M."/>
            <person name="Nierman W.C."/>
            <person name="Osborne B.I."/>
            <person name="Pai G."/>
            <person name="Peterson J."/>
            <person name="Pham P.K."/>
            <person name="Rizzo M."/>
            <person name="Rooney T."/>
            <person name="Rowley D."/>
            <person name="Sakano H."/>
            <person name="Salzberg S.L."/>
            <person name="Schwartz J.R."/>
            <person name="Shinn P."/>
            <person name="Southwick A.M."/>
            <person name="Sun H."/>
            <person name="Tallon L.J."/>
            <person name="Tambunga G."/>
            <person name="Toriumi M.J."/>
            <person name="Town C.D."/>
            <person name="Utterback T."/>
            <person name="Van Aken S."/>
            <person name="Vaysberg M."/>
            <person name="Vysotskaia V.S."/>
            <person name="Walker M."/>
            <person name="Wu D."/>
            <person name="Yu G."/>
            <person name="Fraser C.M."/>
            <person name="Venter J.C."/>
            <person name="Davis R.W."/>
        </authorList>
    </citation>
    <scope>NUCLEOTIDE SEQUENCE [LARGE SCALE GENOMIC DNA]</scope>
    <source>
        <strain>cv. Columbia</strain>
    </source>
</reference>
<reference key="2">
    <citation type="journal article" date="2017" name="Plant J.">
        <title>Araport11: a complete reannotation of the Arabidopsis thaliana reference genome.</title>
        <authorList>
            <person name="Cheng C.Y."/>
            <person name="Krishnakumar V."/>
            <person name="Chan A.P."/>
            <person name="Thibaud-Nissen F."/>
            <person name="Schobel S."/>
            <person name="Town C.D."/>
        </authorList>
    </citation>
    <scope>GENOME REANNOTATION</scope>
    <source>
        <strain>cv. Columbia</strain>
    </source>
</reference>
<reference key="3">
    <citation type="journal article" date="2003" name="Science">
        <title>Empirical analysis of transcriptional activity in the Arabidopsis genome.</title>
        <authorList>
            <person name="Yamada K."/>
            <person name="Lim J."/>
            <person name="Dale J.M."/>
            <person name="Chen H."/>
            <person name="Shinn P."/>
            <person name="Palm C.J."/>
            <person name="Southwick A.M."/>
            <person name="Wu H.C."/>
            <person name="Kim C.J."/>
            <person name="Nguyen M."/>
            <person name="Pham P.K."/>
            <person name="Cheuk R.F."/>
            <person name="Karlin-Newmann G."/>
            <person name="Liu S.X."/>
            <person name="Lam B."/>
            <person name="Sakano H."/>
            <person name="Wu T."/>
            <person name="Yu G."/>
            <person name="Miranda M."/>
            <person name="Quach H.L."/>
            <person name="Tripp M."/>
            <person name="Chang C.H."/>
            <person name="Lee J.M."/>
            <person name="Toriumi M.J."/>
            <person name="Chan M.M."/>
            <person name="Tang C.C."/>
            <person name="Onodera C.S."/>
            <person name="Deng J.M."/>
            <person name="Akiyama K."/>
            <person name="Ansari Y."/>
            <person name="Arakawa T."/>
            <person name="Banh J."/>
            <person name="Banno F."/>
            <person name="Bowser L."/>
            <person name="Brooks S.Y."/>
            <person name="Carninci P."/>
            <person name="Chao Q."/>
            <person name="Choy N."/>
            <person name="Enju A."/>
            <person name="Goldsmith A.D."/>
            <person name="Gurjal M."/>
            <person name="Hansen N.F."/>
            <person name="Hayashizaki Y."/>
            <person name="Johnson-Hopson C."/>
            <person name="Hsuan V.W."/>
            <person name="Iida K."/>
            <person name="Karnes M."/>
            <person name="Khan S."/>
            <person name="Koesema E."/>
            <person name="Ishida J."/>
            <person name="Jiang P.X."/>
            <person name="Jones T."/>
            <person name="Kawai J."/>
            <person name="Kamiya A."/>
            <person name="Meyers C."/>
            <person name="Nakajima M."/>
            <person name="Narusaka M."/>
            <person name="Seki M."/>
            <person name="Sakurai T."/>
            <person name="Satou M."/>
            <person name="Tamse R."/>
            <person name="Vaysberg M."/>
            <person name="Wallender E.K."/>
            <person name="Wong C."/>
            <person name="Yamamura Y."/>
            <person name="Yuan S."/>
            <person name="Shinozaki K."/>
            <person name="Davis R.W."/>
            <person name="Theologis A."/>
            <person name="Ecker J.R."/>
        </authorList>
    </citation>
    <scope>NUCLEOTIDE SEQUENCE [LARGE SCALE MRNA]</scope>
    <source>
        <strain>cv. Columbia</strain>
    </source>
</reference>
<reference key="4">
    <citation type="journal article" date="1998" name="DNA Seq.">
        <title>Two phosphoglycerate kinase cDNAs from Arabidopsis thaliana.</title>
        <authorList>
            <person name="Loebler M."/>
        </authorList>
    </citation>
    <scope>NUCLEOTIDE SEQUENCE [MRNA] OF 248-478</scope>
    <source>
        <strain>cv. Columbia</strain>
        <tissue>Leaf</tissue>
    </source>
</reference>
<reference key="5">
    <citation type="journal article" date="2007" name="Mol. Cell. Proteomics">
        <title>Multidimensional protein identification technology (MudPIT) analysis of ubiquitinated proteins in plants.</title>
        <authorList>
            <person name="Maor R."/>
            <person name="Jones A."/>
            <person name="Nuehse T.S."/>
            <person name="Studholme D.J."/>
            <person name="Peck S.C."/>
            <person name="Shirasu K."/>
        </authorList>
    </citation>
    <scope>IDENTIFICATION BY MASS SPECTROMETRY [LARGE SCALE ANALYSIS]</scope>
    <source>
        <strain>cv. Landsberg erecta</strain>
    </source>
</reference>
<gene>
    <name type="ordered locus">At1g56190</name>
    <name type="ORF">F14G9.19</name>
    <name type="ORF">T6H22.1</name>
</gene>
<organism>
    <name type="scientific">Arabidopsis thaliana</name>
    <name type="common">Mouse-ear cress</name>
    <dbReference type="NCBI Taxonomy" id="3702"/>
    <lineage>
        <taxon>Eukaryota</taxon>
        <taxon>Viridiplantae</taxon>
        <taxon>Streptophyta</taxon>
        <taxon>Embryophyta</taxon>
        <taxon>Tracheophyta</taxon>
        <taxon>Spermatophyta</taxon>
        <taxon>Magnoliopsida</taxon>
        <taxon>eudicotyledons</taxon>
        <taxon>Gunneridae</taxon>
        <taxon>Pentapetalae</taxon>
        <taxon>rosids</taxon>
        <taxon>malvids</taxon>
        <taxon>Brassicales</taxon>
        <taxon>Brassicaceae</taxon>
        <taxon>Camelineae</taxon>
        <taxon>Arabidopsis</taxon>
    </lineage>
</organism>
<keyword id="KW-0025">Alternative splicing</keyword>
<keyword id="KW-0067">ATP-binding</keyword>
<keyword id="KW-0113">Calvin cycle</keyword>
<keyword id="KW-0150">Chloroplast</keyword>
<keyword id="KW-0418">Kinase</keyword>
<keyword id="KW-0460">Magnesium</keyword>
<keyword id="KW-0479">Metal-binding</keyword>
<keyword id="KW-0547">Nucleotide-binding</keyword>
<keyword id="KW-0597">Phosphoprotein</keyword>
<keyword id="KW-0934">Plastid</keyword>
<keyword id="KW-1185">Reference proteome</keyword>
<keyword id="KW-0808">Transferase</keyword>
<keyword id="KW-0809">Transit peptide</keyword>
<name>PGKH2_ARATH</name>
<accession>P50318</accession>
<accession>Q42542</accession>
<accession>Q9C7J4</accession>
<accession>Q9SGU6</accession>